<feature type="chain" id="PRO_1000022657" description="Trigger factor">
    <location>
        <begin position="1"/>
        <end position="449"/>
    </location>
</feature>
<feature type="domain" description="PPIase FKBP-type" evidence="1">
    <location>
        <begin position="173"/>
        <end position="258"/>
    </location>
</feature>
<protein>
    <recommendedName>
        <fullName evidence="1">Trigger factor</fullName>
        <shortName evidence="1">TF</shortName>
        <ecNumber evidence="1">5.2.1.8</ecNumber>
    </recommendedName>
    <alternativeName>
        <fullName evidence="1">PPIase</fullName>
    </alternativeName>
</protein>
<name>TIG_BURP6</name>
<reference key="1">
    <citation type="journal article" date="2010" name="Genome Biol. Evol.">
        <title>Continuing evolution of Burkholderia mallei through genome reduction and large-scale rearrangements.</title>
        <authorList>
            <person name="Losada L."/>
            <person name="Ronning C.M."/>
            <person name="DeShazer D."/>
            <person name="Woods D."/>
            <person name="Fedorova N."/>
            <person name="Kim H.S."/>
            <person name="Shabalina S.A."/>
            <person name="Pearson T.R."/>
            <person name="Brinkac L."/>
            <person name="Tan P."/>
            <person name="Nandi T."/>
            <person name="Crabtree J."/>
            <person name="Badger J."/>
            <person name="Beckstrom-Sternberg S."/>
            <person name="Saqib M."/>
            <person name="Schutzer S.E."/>
            <person name="Keim P."/>
            <person name="Nierman W.C."/>
        </authorList>
    </citation>
    <scope>NUCLEOTIDE SEQUENCE [LARGE SCALE GENOMIC DNA]</scope>
    <source>
        <strain>668</strain>
    </source>
</reference>
<organism>
    <name type="scientific">Burkholderia pseudomallei (strain 668)</name>
    <dbReference type="NCBI Taxonomy" id="320373"/>
    <lineage>
        <taxon>Bacteria</taxon>
        <taxon>Pseudomonadati</taxon>
        <taxon>Pseudomonadota</taxon>
        <taxon>Betaproteobacteria</taxon>
        <taxon>Burkholderiales</taxon>
        <taxon>Burkholderiaceae</taxon>
        <taxon>Burkholderia</taxon>
        <taxon>pseudomallei group</taxon>
    </lineage>
</organism>
<dbReference type="EC" id="5.2.1.8" evidence="1"/>
<dbReference type="EMBL" id="CP000570">
    <property type="protein sequence ID" value="ABN82592.1"/>
    <property type="molecule type" value="Genomic_DNA"/>
</dbReference>
<dbReference type="RefSeq" id="WP_004521257.1">
    <property type="nucleotide sequence ID" value="NC_009074.1"/>
</dbReference>
<dbReference type="SMR" id="A3NAI6"/>
<dbReference type="GeneID" id="93060596"/>
<dbReference type="KEGG" id="bpd:BURPS668_2324"/>
<dbReference type="HOGENOM" id="CLU_033058_2_0_4"/>
<dbReference type="GO" id="GO:0005737">
    <property type="term" value="C:cytoplasm"/>
    <property type="evidence" value="ECO:0007669"/>
    <property type="project" value="UniProtKB-SubCell"/>
</dbReference>
<dbReference type="GO" id="GO:0003755">
    <property type="term" value="F:peptidyl-prolyl cis-trans isomerase activity"/>
    <property type="evidence" value="ECO:0007669"/>
    <property type="project" value="UniProtKB-UniRule"/>
</dbReference>
<dbReference type="GO" id="GO:0044183">
    <property type="term" value="F:protein folding chaperone"/>
    <property type="evidence" value="ECO:0007669"/>
    <property type="project" value="TreeGrafter"/>
</dbReference>
<dbReference type="GO" id="GO:0043022">
    <property type="term" value="F:ribosome binding"/>
    <property type="evidence" value="ECO:0007669"/>
    <property type="project" value="TreeGrafter"/>
</dbReference>
<dbReference type="GO" id="GO:0051083">
    <property type="term" value="P:'de novo' cotranslational protein folding"/>
    <property type="evidence" value="ECO:0007669"/>
    <property type="project" value="TreeGrafter"/>
</dbReference>
<dbReference type="GO" id="GO:0051301">
    <property type="term" value="P:cell division"/>
    <property type="evidence" value="ECO:0007669"/>
    <property type="project" value="UniProtKB-KW"/>
</dbReference>
<dbReference type="GO" id="GO:0061077">
    <property type="term" value="P:chaperone-mediated protein folding"/>
    <property type="evidence" value="ECO:0007669"/>
    <property type="project" value="TreeGrafter"/>
</dbReference>
<dbReference type="GO" id="GO:0015031">
    <property type="term" value="P:protein transport"/>
    <property type="evidence" value="ECO:0007669"/>
    <property type="project" value="UniProtKB-UniRule"/>
</dbReference>
<dbReference type="GO" id="GO:0043335">
    <property type="term" value="P:protein unfolding"/>
    <property type="evidence" value="ECO:0007669"/>
    <property type="project" value="TreeGrafter"/>
</dbReference>
<dbReference type="FunFam" id="3.10.50.40:FF:000001">
    <property type="entry name" value="Trigger factor"/>
    <property type="match status" value="1"/>
</dbReference>
<dbReference type="Gene3D" id="3.10.50.40">
    <property type="match status" value="1"/>
</dbReference>
<dbReference type="Gene3D" id="3.30.70.1050">
    <property type="entry name" value="Trigger factor ribosome-binding domain"/>
    <property type="match status" value="1"/>
</dbReference>
<dbReference type="Gene3D" id="1.10.3120.10">
    <property type="entry name" value="Trigger factor, C-terminal domain"/>
    <property type="match status" value="1"/>
</dbReference>
<dbReference type="HAMAP" id="MF_00303">
    <property type="entry name" value="Trigger_factor_Tig"/>
    <property type="match status" value="1"/>
</dbReference>
<dbReference type="InterPro" id="IPR046357">
    <property type="entry name" value="PPIase_dom_sf"/>
</dbReference>
<dbReference type="InterPro" id="IPR001179">
    <property type="entry name" value="PPIase_FKBP_dom"/>
</dbReference>
<dbReference type="InterPro" id="IPR005215">
    <property type="entry name" value="Trig_fac"/>
</dbReference>
<dbReference type="InterPro" id="IPR008880">
    <property type="entry name" value="Trigger_fac_C"/>
</dbReference>
<dbReference type="InterPro" id="IPR037041">
    <property type="entry name" value="Trigger_fac_C_sf"/>
</dbReference>
<dbReference type="InterPro" id="IPR008881">
    <property type="entry name" value="Trigger_fac_ribosome-bd_bac"/>
</dbReference>
<dbReference type="InterPro" id="IPR036611">
    <property type="entry name" value="Trigger_fac_ribosome-bd_sf"/>
</dbReference>
<dbReference type="InterPro" id="IPR027304">
    <property type="entry name" value="Trigger_fact/SurA_dom_sf"/>
</dbReference>
<dbReference type="NCBIfam" id="TIGR00115">
    <property type="entry name" value="tig"/>
    <property type="match status" value="1"/>
</dbReference>
<dbReference type="PANTHER" id="PTHR30560">
    <property type="entry name" value="TRIGGER FACTOR CHAPERONE AND PEPTIDYL-PROLYL CIS/TRANS ISOMERASE"/>
    <property type="match status" value="1"/>
</dbReference>
<dbReference type="PANTHER" id="PTHR30560:SF3">
    <property type="entry name" value="TRIGGER FACTOR-LIKE PROTEIN TIG, CHLOROPLASTIC"/>
    <property type="match status" value="1"/>
</dbReference>
<dbReference type="Pfam" id="PF00254">
    <property type="entry name" value="FKBP_C"/>
    <property type="match status" value="1"/>
</dbReference>
<dbReference type="Pfam" id="PF05698">
    <property type="entry name" value="Trigger_C"/>
    <property type="match status" value="1"/>
</dbReference>
<dbReference type="Pfam" id="PF05697">
    <property type="entry name" value="Trigger_N"/>
    <property type="match status" value="1"/>
</dbReference>
<dbReference type="PIRSF" id="PIRSF003095">
    <property type="entry name" value="Trigger_factor"/>
    <property type="match status" value="1"/>
</dbReference>
<dbReference type="SUPFAM" id="SSF54534">
    <property type="entry name" value="FKBP-like"/>
    <property type="match status" value="1"/>
</dbReference>
<dbReference type="SUPFAM" id="SSF109998">
    <property type="entry name" value="Triger factor/SurA peptide-binding domain-like"/>
    <property type="match status" value="1"/>
</dbReference>
<dbReference type="SUPFAM" id="SSF102735">
    <property type="entry name" value="Trigger factor ribosome-binding domain"/>
    <property type="match status" value="1"/>
</dbReference>
<dbReference type="PROSITE" id="PS50059">
    <property type="entry name" value="FKBP_PPIASE"/>
    <property type="match status" value="1"/>
</dbReference>
<gene>
    <name evidence="1" type="primary">tig</name>
    <name type="ordered locus">BURPS668_2324</name>
</gene>
<sequence length="449" mass="49768">MANVVENLGKLERRVTISLPKDVVQKEIDARIQKLAKNVRMPGFRPGKVPLKMVAQQYAGQVEAEVLSDKIGQEFFTISRAENLRVAGQPSFAPKEDTQQESTYAFDATFEVYPEVKIGDLATAEVERSTTTIGDAEIDRTLDILRKQRVHFHARGEGGEHGDGGADTAAQNGDRVTVDFVGKIDGVAFQGGTAEDFVFVLGEGRMLPEFETAALGLKAGESREFDLKFPDDYHGKDVAGKTAQFTVTLKKVEWPHLPEIDADFAKSLGVEDGDLTKMRAEIKENLEREAKRRTQSIVKNQVMDALLKISELDVPKALIEQDQQRLVEMARQDLAQRGVPNAKDAPIPAEMFADQAERRVKLGLVLAELVKANGLEAKPEQIRAEVDEFAKSYEDPKEVVRWYYSNQQRLAEMEAFVVESNVVDFVLGKAKVTDKEVSFEALASATAQA</sequence>
<proteinExistence type="inferred from homology"/>
<evidence type="ECO:0000255" key="1">
    <source>
        <dbReference type="HAMAP-Rule" id="MF_00303"/>
    </source>
</evidence>
<accession>A3NAI6</accession>
<keyword id="KW-0131">Cell cycle</keyword>
<keyword id="KW-0132">Cell division</keyword>
<keyword id="KW-0143">Chaperone</keyword>
<keyword id="KW-0963">Cytoplasm</keyword>
<keyword id="KW-0413">Isomerase</keyword>
<keyword id="KW-0697">Rotamase</keyword>
<comment type="function">
    <text evidence="1">Involved in protein export. Acts as a chaperone by maintaining the newly synthesized protein in an open conformation. Functions as a peptidyl-prolyl cis-trans isomerase.</text>
</comment>
<comment type="catalytic activity">
    <reaction evidence="1">
        <text>[protein]-peptidylproline (omega=180) = [protein]-peptidylproline (omega=0)</text>
        <dbReference type="Rhea" id="RHEA:16237"/>
        <dbReference type="Rhea" id="RHEA-COMP:10747"/>
        <dbReference type="Rhea" id="RHEA-COMP:10748"/>
        <dbReference type="ChEBI" id="CHEBI:83833"/>
        <dbReference type="ChEBI" id="CHEBI:83834"/>
        <dbReference type="EC" id="5.2.1.8"/>
    </reaction>
</comment>
<comment type="subcellular location">
    <subcellularLocation>
        <location>Cytoplasm</location>
    </subcellularLocation>
    <text evidence="1">About half TF is bound to the ribosome near the polypeptide exit tunnel while the other half is free in the cytoplasm.</text>
</comment>
<comment type="domain">
    <text evidence="1">Consists of 3 domains; the N-terminus binds the ribosome, the middle domain has PPIase activity, while the C-terminus has intrinsic chaperone activity on its own.</text>
</comment>
<comment type="similarity">
    <text evidence="1">Belongs to the FKBP-type PPIase family. Tig subfamily.</text>
</comment>